<dbReference type="EC" id="3.6.4.10" evidence="2"/>
<dbReference type="EMBL" id="Y00054">
    <property type="protein sequence ID" value="CAA68265.1"/>
    <property type="molecule type" value="Genomic_DNA"/>
</dbReference>
<dbReference type="EMBL" id="M11942">
    <property type="protein sequence ID" value="AAA41354.1"/>
    <property type="molecule type" value="mRNA"/>
</dbReference>
<dbReference type="EMBL" id="BC061547">
    <property type="protein sequence ID" value="AAH61547.1"/>
    <property type="molecule type" value="mRNA"/>
</dbReference>
<dbReference type="EMBL" id="BC098914">
    <property type="protein sequence ID" value="AAH98914.1"/>
    <property type="molecule type" value="mRNA"/>
</dbReference>
<dbReference type="PIR" id="S07197">
    <property type="entry name" value="S07197"/>
</dbReference>
<dbReference type="RefSeq" id="NP_077327.1">
    <property type="nucleotide sequence ID" value="NM_024351.2"/>
</dbReference>
<dbReference type="PDB" id="1CKR">
    <property type="method" value="NMR"/>
    <property type="chains" value="A=385-543"/>
</dbReference>
<dbReference type="PDB" id="1UD0">
    <property type="method" value="X-ray"/>
    <property type="resolution" value="3.45 A"/>
    <property type="chains" value="A/B/C/D=542-646"/>
</dbReference>
<dbReference type="PDB" id="2V7Z">
    <property type="method" value="X-ray"/>
    <property type="resolution" value="3.50 A"/>
    <property type="chains" value="A/B=1-543"/>
</dbReference>
<dbReference type="PDB" id="7HSC">
    <property type="method" value="NMR"/>
    <property type="chains" value="A=385-543"/>
</dbReference>
<dbReference type="PDBsum" id="1CKR"/>
<dbReference type="PDBsum" id="1UD0"/>
<dbReference type="PDBsum" id="2V7Z"/>
<dbReference type="PDBsum" id="7HSC"/>
<dbReference type="SMR" id="P63018"/>
<dbReference type="BioGRID" id="246629">
    <property type="interactions" value="26"/>
</dbReference>
<dbReference type="CORUM" id="P63018"/>
<dbReference type="DIP" id="DIP-33262N"/>
<dbReference type="FunCoup" id="P63018">
    <property type="interactions" value="3304"/>
</dbReference>
<dbReference type="IntAct" id="P63018">
    <property type="interactions" value="15"/>
</dbReference>
<dbReference type="MINT" id="P63018"/>
<dbReference type="STRING" id="10116.ENSRNOP00000058593"/>
<dbReference type="GlyGen" id="P63018">
    <property type="glycosylation" value="1 site, 1 O-linked glycan (1 site)"/>
</dbReference>
<dbReference type="iPTMnet" id="P63018"/>
<dbReference type="PhosphoSitePlus" id="P63018"/>
<dbReference type="SwissPalm" id="P63018"/>
<dbReference type="jPOST" id="P63018"/>
<dbReference type="PaxDb" id="10116-ENSRNOP00000058593"/>
<dbReference type="Ensembl" id="ENSRNOT00000044608.6">
    <property type="protein sequence ID" value="ENSRNOP00000042159.6"/>
    <property type="gene ID" value="ENSRNOG00000034066.6"/>
</dbReference>
<dbReference type="GeneID" id="24468"/>
<dbReference type="KEGG" id="rno:24468"/>
<dbReference type="UCSC" id="RGD:621725">
    <property type="organism name" value="rat"/>
</dbReference>
<dbReference type="AGR" id="RGD:621725"/>
<dbReference type="CTD" id="3312"/>
<dbReference type="RGD" id="621725">
    <property type="gene designation" value="Hspa8"/>
</dbReference>
<dbReference type="eggNOG" id="KOG0101">
    <property type="taxonomic scope" value="Eukaryota"/>
</dbReference>
<dbReference type="GeneTree" id="ENSGT00950000183206"/>
<dbReference type="InParanoid" id="P63018"/>
<dbReference type="OMA" id="AYTKNQD"/>
<dbReference type="OrthoDB" id="2401965at2759"/>
<dbReference type="PhylomeDB" id="P63018"/>
<dbReference type="Reactome" id="R-RNO-3371453">
    <property type="pathway name" value="Regulation of HSF1-mediated heat shock response"/>
</dbReference>
<dbReference type="Reactome" id="R-RNO-3371497">
    <property type="pathway name" value="HSP90 chaperone cycle for steroid hormone receptors (SHR) in the presence of ligand"/>
</dbReference>
<dbReference type="Reactome" id="R-RNO-3371568">
    <property type="pathway name" value="Attenuation phase"/>
</dbReference>
<dbReference type="Reactome" id="R-RNO-3371571">
    <property type="pathway name" value="HSF1-dependent transactivation"/>
</dbReference>
<dbReference type="Reactome" id="R-RNO-432720">
    <property type="pathway name" value="Lysosome Vesicle Biogenesis"/>
</dbReference>
<dbReference type="Reactome" id="R-RNO-432722">
    <property type="pathway name" value="Golgi Associated Vesicle Biogenesis"/>
</dbReference>
<dbReference type="Reactome" id="R-RNO-450408">
    <property type="pathway name" value="AUF1 (hnRNP D0) binds and destabilizes mRNA"/>
</dbReference>
<dbReference type="Reactome" id="R-RNO-6798695">
    <property type="pathway name" value="Neutrophil degranulation"/>
</dbReference>
<dbReference type="Reactome" id="R-RNO-72163">
    <property type="pathway name" value="mRNA Splicing - Major Pathway"/>
</dbReference>
<dbReference type="Reactome" id="R-RNO-8856828">
    <property type="pathway name" value="Clathrin-mediated endocytosis"/>
</dbReference>
<dbReference type="Reactome" id="R-RNO-8876725">
    <property type="pathway name" value="Protein methylation"/>
</dbReference>
<dbReference type="Reactome" id="R-RNO-888590">
    <property type="pathway name" value="GABA synthesis, release, reuptake and degradation"/>
</dbReference>
<dbReference type="Reactome" id="R-RNO-9833482">
    <property type="pathway name" value="PKR-mediated signaling"/>
</dbReference>
<dbReference type="EvolutionaryTrace" id="P63018"/>
<dbReference type="PRO" id="PR:P63018"/>
<dbReference type="Proteomes" id="UP000002494">
    <property type="component" value="Chromosome 8"/>
</dbReference>
<dbReference type="GO" id="GO:0032279">
    <property type="term" value="C:asymmetric synapse"/>
    <property type="evidence" value="ECO:0000314"/>
    <property type="project" value="RGD"/>
</dbReference>
<dbReference type="GO" id="GO:0005776">
    <property type="term" value="C:autophagosome"/>
    <property type="evidence" value="ECO:0000314"/>
    <property type="project" value="RGD"/>
</dbReference>
<dbReference type="GO" id="GO:0030424">
    <property type="term" value="C:axon"/>
    <property type="evidence" value="ECO:0000314"/>
    <property type="project" value="RGD"/>
</dbReference>
<dbReference type="GO" id="GO:0009986">
    <property type="term" value="C:cell surface"/>
    <property type="evidence" value="ECO:0000314"/>
    <property type="project" value="RGD"/>
</dbReference>
<dbReference type="GO" id="GO:0005737">
    <property type="term" value="C:cytoplasm"/>
    <property type="evidence" value="ECO:0000266"/>
    <property type="project" value="RGD"/>
</dbReference>
<dbReference type="GO" id="GO:0005829">
    <property type="term" value="C:cytosol"/>
    <property type="evidence" value="ECO:0000266"/>
    <property type="project" value="RGD"/>
</dbReference>
<dbReference type="GO" id="GO:0030425">
    <property type="term" value="C:dendrite"/>
    <property type="evidence" value="ECO:0000314"/>
    <property type="project" value="ParkinsonsUK-UCL"/>
</dbReference>
<dbReference type="GO" id="GO:0043198">
    <property type="term" value="C:dendritic shaft"/>
    <property type="evidence" value="ECO:0000314"/>
    <property type="project" value="RGD"/>
</dbReference>
<dbReference type="GO" id="GO:0043197">
    <property type="term" value="C:dendritic spine"/>
    <property type="evidence" value="ECO:0000314"/>
    <property type="project" value="RGD"/>
</dbReference>
<dbReference type="GO" id="GO:0070062">
    <property type="term" value="C:extracellular exosome"/>
    <property type="evidence" value="ECO:0000266"/>
    <property type="project" value="RGD"/>
</dbReference>
<dbReference type="GO" id="GO:0005615">
    <property type="term" value="C:extracellular space"/>
    <property type="evidence" value="ECO:0000266"/>
    <property type="project" value="RGD"/>
</dbReference>
<dbReference type="GO" id="GO:0098978">
    <property type="term" value="C:glutamatergic synapse"/>
    <property type="evidence" value="ECO:0000314"/>
    <property type="project" value="SynGO"/>
</dbReference>
<dbReference type="GO" id="GO:0098690">
    <property type="term" value="C:glycinergic synapse"/>
    <property type="evidence" value="ECO:0000314"/>
    <property type="project" value="SynGO"/>
</dbReference>
<dbReference type="GO" id="GO:0005882">
    <property type="term" value="C:intermediate filament"/>
    <property type="evidence" value="ECO:0000314"/>
    <property type="project" value="RGD"/>
</dbReference>
<dbReference type="GO" id="GO:0005770">
    <property type="term" value="C:late endosome"/>
    <property type="evidence" value="ECO:0000266"/>
    <property type="project" value="RGD"/>
</dbReference>
<dbReference type="GO" id="GO:0043202">
    <property type="term" value="C:lysosomal lumen"/>
    <property type="evidence" value="ECO:0000304"/>
    <property type="project" value="Reactome"/>
</dbReference>
<dbReference type="GO" id="GO:1990836">
    <property type="term" value="C:lysosomal matrix"/>
    <property type="evidence" value="ECO:0000314"/>
    <property type="project" value="MGI"/>
</dbReference>
<dbReference type="GO" id="GO:0005765">
    <property type="term" value="C:lysosomal membrane"/>
    <property type="evidence" value="ECO:0000314"/>
    <property type="project" value="MGI"/>
</dbReference>
<dbReference type="GO" id="GO:0042470">
    <property type="term" value="C:melanosome"/>
    <property type="evidence" value="ECO:0007669"/>
    <property type="project" value="UniProtKB-SubCell"/>
</dbReference>
<dbReference type="GO" id="GO:0005874">
    <property type="term" value="C:microtubule"/>
    <property type="evidence" value="ECO:0000314"/>
    <property type="project" value="RGD"/>
</dbReference>
<dbReference type="GO" id="GO:0044309">
    <property type="term" value="C:neuron spine"/>
    <property type="evidence" value="ECO:0000314"/>
    <property type="project" value="ParkinsonsUK-UCL"/>
</dbReference>
<dbReference type="GO" id="GO:0043025">
    <property type="term" value="C:neuronal cell body"/>
    <property type="evidence" value="ECO:0000314"/>
    <property type="project" value="RGD"/>
</dbReference>
<dbReference type="GO" id="GO:0005730">
    <property type="term" value="C:nucleolus"/>
    <property type="evidence" value="ECO:0007669"/>
    <property type="project" value="UniProtKB-SubCell"/>
</dbReference>
<dbReference type="GO" id="GO:0005634">
    <property type="term" value="C:nucleus"/>
    <property type="evidence" value="ECO:0000250"/>
    <property type="project" value="UniProtKB"/>
</dbReference>
<dbReference type="GO" id="GO:0043204">
    <property type="term" value="C:perikaryon"/>
    <property type="evidence" value="ECO:0000314"/>
    <property type="project" value="RGD"/>
</dbReference>
<dbReference type="GO" id="GO:0048471">
    <property type="term" value="C:perinuclear region of cytoplasm"/>
    <property type="evidence" value="ECO:0000314"/>
    <property type="project" value="RGD"/>
</dbReference>
<dbReference type="GO" id="GO:0001917">
    <property type="term" value="C:photoreceptor inner segment"/>
    <property type="evidence" value="ECO:0000314"/>
    <property type="project" value="RGD"/>
</dbReference>
<dbReference type="GO" id="GO:0098684">
    <property type="term" value="C:photoreceptor ribbon synapse"/>
    <property type="evidence" value="ECO:0000266"/>
    <property type="project" value="RGD"/>
</dbReference>
<dbReference type="GO" id="GO:0005886">
    <property type="term" value="C:plasma membrane"/>
    <property type="evidence" value="ECO:0000318"/>
    <property type="project" value="GO_Central"/>
</dbReference>
<dbReference type="GO" id="GO:0098794">
    <property type="term" value="C:postsynapse"/>
    <property type="evidence" value="ECO:0000314"/>
    <property type="project" value="SynGO"/>
</dbReference>
<dbReference type="GO" id="GO:0014069">
    <property type="term" value="C:postsynaptic density"/>
    <property type="evidence" value="ECO:0000314"/>
    <property type="project" value="ParkinsonsUK-UCL"/>
</dbReference>
<dbReference type="GO" id="GO:0099634">
    <property type="term" value="C:postsynaptic specialization membrane"/>
    <property type="evidence" value="ECO:0000266"/>
    <property type="project" value="RGD"/>
</dbReference>
<dbReference type="GO" id="GO:0098793">
    <property type="term" value="C:presynapse"/>
    <property type="evidence" value="ECO:0000314"/>
    <property type="project" value="SynGO"/>
</dbReference>
<dbReference type="GO" id="GO:0101031">
    <property type="term" value="C:protein folding chaperone complex"/>
    <property type="evidence" value="ECO:0000266"/>
    <property type="project" value="RGD"/>
</dbReference>
<dbReference type="GO" id="GO:0032991">
    <property type="term" value="C:protein-containing complex"/>
    <property type="evidence" value="ECO:0000314"/>
    <property type="project" value="RGD"/>
</dbReference>
<dbReference type="GO" id="GO:0000974">
    <property type="term" value="C:Prp19 complex"/>
    <property type="evidence" value="ECO:0000250"/>
    <property type="project" value="UniProtKB"/>
</dbReference>
<dbReference type="GO" id="GO:1990904">
    <property type="term" value="C:ribonucleoprotein complex"/>
    <property type="evidence" value="ECO:0000250"/>
    <property type="project" value="UniProtKB"/>
</dbReference>
<dbReference type="GO" id="GO:0005681">
    <property type="term" value="C:spliceosomal complex"/>
    <property type="evidence" value="ECO:0000266"/>
    <property type="project" value="RGD"/>
</dbReference>
<dbReference type="GO" id="GO:0008021">
    <property type="term" value="C:synaptic vesicle"/>
    <property type="evidence" value="ECO:0000314"/>
    <property type="project" value="RGD"/>
</dbReference>
<dbReference type="GO" id="GO:0043195">
    <property type="term" value="C:terminal bouton"/>
    <property type="evidence" value="ECO:0000314"/>
    <property type="project" value="RGD"/>
</dbReference>
<dbReference type="GO" id="GO:0031686">
    <property type="term" value="F:A1 adenosine receptor binding"/>
    <property type="evidence" value="ECO:0000353"/>
    <property type="project" value="RGD"/>
</dbReference>
<dbReference type="GO" id="GO:0043531">
    <property type="term" value="F:ADP binding"/>
    <property type="evidence" value="ECO:0000314"/>
    <property type="project" value="RGD"/>
</dbReference>
<dbReference type="GO" id="GO:0005524">
    <property type="term" value="F:ATP binding"/>
    <property type="evidence" value="ECO:0000314"/>
    <property type="project" value="RGD"/>
</dbReference>
<dbReference type="GO" id="GO:0016887">
    <property type="term" value="F:ATP hydrolysis activity"/>
    <property type="evidence" value="ECO:0000314"/>
    <property type="project" value="MGI"/>
</dbReference>
<dbReference type="GO" id="GO:0140545">
    <property type="term" value="F:ATP-dependent protein disaggregase activity"/>
    <property type="evidence" value="ECO:0000266"/>
    <property type="project" value="RGD"/>
</dbReference>
<dbReference type="GO" id="GO:0140662">
    <property type="term" value="F:ATP-dependent protein folding chaperone"/>
    <property type="evidence" value="ECO:0007669"/>
    <property type="project" value="InterPro"/>
</dbReference>
<dbReference type="GO" id="GO:0055131">
    <property type="term" value="F:C3HC4-type RING finger domain binding"/>
    <property type="evidence" value="ECO:0000266"/>
    <property type="project" value="RGD"/>
</dbReference>
<dbReference type="GO" id="GO:1990833">
    <property type="term" value="F:clathrin-uncoating ATPase activity"/>
    <property type="evidence" value="ECO:0000314"/>
    <property type="project" value="RGD"/>
</dbReference>
<dbReference type="GO" id="GO:0019899">
    <property type="term" value="F:enzyme binding"/>
    <property type="evidence" value="ECO:0000353"/>
    <property type="project" value="RGD"/>
</dbReference>
<dbReference type="GO" id="GO:0001664">
    <property type="term" value="F:G protein-coupled receptor binding"/>
    <property type="evidence" value="ECO:0000266"/>
    <property type="project" value="RGD"/>
</dbReference>
<dbReference type="GO" id="GO:0031072">
    <property type="term" value="F:heat shock protein binding"/>
    <property type="evidence" value="ECO:0000266"/>
    <property type="project" value="RGD"/>
</dbReference>
<dbReference type="GO" id="GO:0042277">
    <property type="term" value="F:peptide binding"/>
    <property type="evidence" value="ECO:0000314"/>
    <property type="project" value="RGD"/>
</dbReference>
<dbReference type="GO" id="GO:0001786">
    <property type="term" value="F:phosphatidylserine binding"/>
    <property type="evidence" value="ECO:0000266"/>
    <property type="project" value="RGD"/>
</dbReference>
<dbReference type="GO" id="GO:1904593">
    <property type="term" value="F:prostaglandin binding"/>
    <property type="evidence" value="ECO:0000353"/>
    <property type="project" value="RGD"/>
</dbReference>
<dbReference type="GO" id="GO:0044183">
    <property type="term" value="F:protein folding chaperone"/>
    <property type="evidence" value="ECO:0000318"/>
    <property type="project" value="GO_Central"/>
</dbReference>
<dbReference type="GO" id="GO:0051087">
    <property type="term" value="F:protein-folding chaperone binding"/>
    <property type="evidence" value="ECO:0000266"/>
    <property type="project" value="RGD"/>
</dbReference>
<dbReference type="GO" id="GO:0030674">
    <property type="term" value="F:protein-macromolecule adaptor activity"/>
    <property type="evidence" value="ECO:0000250"/>
    <property type="project" value="UniProtKB"/>
</dbReference>
<dbReference type="GO" id="GO:0048018">
    <property type="term" value="F:receptor ligand activity"/>
    <property type="evidence" value="ECO:0000266"/>
    <property type="project" value="RGD"/>
</dbReference>
<dbReference type="GO" id="GO:0003723">
    <property type="term" value="F:RNA binding"/>
    <property type="evidence" value="ECO:0000314"/>
    <property type="project" value="RGD"/>
</dbReference>
<dbReference type="GO" id="GO:0005102">
    <property type="term" value="F:signaling receptor binding"/>
    <property type="evidence" value="ECO:0000353"/>
    <property type="project" value="RGD"/>
</dbReference>
<dbReference type="GO" id="GO:0031625">
    <property type="term" value="F:ubiquitin protein ligase binding"/>
    <property type="evidence" value="ECO:0000266"/>
    <property type="project" value="RGD"/>
</dbReference>
<dbReference type="GO" id="GO:0051082">
    <property type="term" value="F:unfolded protein binding"/>
    <property type="evidence" value="ECO:0000315"/>
    <property type="project" value="RGD"/>
</dbReference>
<dbReference type="GO" id="GO:0046034">
    <property type="term" value="P:ATP metabolic process"/>
    <property type="evidence" value="ECO:0000266"/>
    <property type="project" value="RGD"/>
</dbReference>
<dbReference type="GO" id="GO:0008088">
    <property type="term" value="P:axo-dendritic transport"/>
    <property type="evidence" value="ECO:0000270"/>
    <property type="project" value="RGD"/>
</dbReference>
<dbReference type="GO" id="GO:0071276">
    <property type="term" value="P:cellular response to cadmium ion"/>
    <property type="evidence" value="ECO:0000270"/>
    <property type="project" value="RGD"/>
</dbReference>
<dbReference type="GO" id="GO:0034605">
    <property type="term" value="P:cellular response to heat"/>
    <property type="evidence" value="ECO:0000270"/>
    <property type="project" value="RGD"/>
</dbReference>
<dbReference type="GO" id="GO:0070301">
    <property type="term" value="P:cellular response to hydrogen peroxide"/>
    <property type="evidence" value="ECO:0000270"/>
    <property type="project" value="RGD"/>
</dbReference>
<dbReference type="GO" id="GO:0021549">
    <property type="term" value="P:cerebellum development"/>
    <property type="evidence" value="ECO:0000270"/>
    <property type="project" value="RGD"/>
</dbReference>
<dbReference type="GO" id="GO:0051085">
    <property type="term" value="P:chaperone cofactor-dependent protein refolding"/>
    <property type="evidence" value="ECO:0000266"/>
    <property type="project" value="RGD"/>
</dbReference>
<dbReference type="GO" id="GO:0061684">
    <property type="term" value="P:chaperone-mediated autophagy"/>
    <property type="evidence" value="ECO:0000314"/>
    <property type="project" value="ParkinsonsUK-UCL"/>
</dbReference>
<dbReference type="GO" id="GO:1904764">
    <property type="term" value="P:chaperone-mediated autophagy translocation complex disassembly"/>
    <property type="evidence" value="ECO:0000314"/>
    <property type="project" value="ParkinsonsUK-UCL"/>
</dbReference>
<dbReference type="GO" id="GO:0061077">
    <property type="term" value="P:chaperone-mediated protein folding"/>
    <property type="evidence" value="ECO:0000314"/>
    <property type="project" value="RGD"/>
</dbReference>
<dbReference type="GO" id="GO:0072318">
    <property type="term" value="P:clathrin coat disassembly"/>
    <property type="evidence" value="ECO:0000314"/>
    <property type="project" value="UniProtKB"/>
</dbReference>
<dbReference type="GO" id="GO:0044849">
    <property type="term" value="P:estrous cycle"/>
    <property type="evidence" value="ECO:0000270"/>
    <property type="project" value="RGD"/>
</dbReference>
<dbReference type="GO" id="GO:0030900">
    <property type="term" value="P:forebrain development"/>
    <property type="evidence" value="ECO:0000270"/>
    <property type="project" value="RGD"/>
</dbReference>
<dbReference type="GO" id="GO:0000082">
    <property type="term" value="P:G1/S transition of mitotic cell cycle"/>
    <property type="evidence" value="ECO:0000270"/>
    <property type="project" value="RGD"/>
</dbReference>
<dbReference type="GO" id="GO:0001822">
    <property type="term" value="P:kidney development"/>
    <property type="evidence" value="ECO:0000270"/>
    <property type="project" value="RGD"/>
</dbReference>
<dbReference type="GO" id="GO:0061738">
    <property type="term" value="P:late endosomal microautophagy"/>
    <property type="evidence" value="ECO:0000266"/>
    <property type="project" value="RGD"/>
</dbReference>
<dbReference type="GO" id="GO:0098880">
    <property type="term" value="P:maintenance of postsynaptic specialization structure"/>
    <property type="evidence" value="ECO:0000314"/>
    <property type="project" value="SynGO"/>
</dbReference>
<dbReference type="GO" id="GO:0044788">
    <property type="term" value="P:modulation by host of viral process"/>
    <property type="evidence" value="ECO:0000266"/>
    <property type="project" value="RGD"/>
</dbReference>
<dbReference type="GO" id="GO:0006397">
    <property type="term" value="P:mRNA processing"/>
    <property type="evidence" value="ECO:0007669"/>
    <property type="project" value="UniProtKB-KW"/>
</dbReference>
<dbReference type="GO" id="GO:0010667">
    <property type="term" value="P:negative regulation of cardiac muscle cell apoptotic process"/>
    <property type="evidence" value="ECO:0000315"/>
    <property type="project" value="RGD"/>
</dbReference>
<dbReference type="GO" id="GO:0045892">
    <property type="term" value="P:negative regulation of DNA-templated transcription"/>
    <property type="evidence" value="ECO:0000250"/>
    <property type="project" value="UniProtKB"/>
</dbReference>
<dbReference type="GO" id="GO:1900226">
    <property type="term" value="P:negative regulation of NLRP3 inflammasome complex assembly"/>
    <property type="evidence" value="ECO:0000266"/>
    <property type="project" value="RGD"/>
</dbReference>
<dbReference type="GO" id="GO:1902904">
    <property type="term" value="P:negative regulation of supramolecular fiber organization"/>
    <property type="evidence" value="ECO:0000266"/>
    <property type="project" value="RGD"/>
</dbReference>
<dbReference type="GO" id="GO:0044829">
    <property type="term" value="P:positive regulation by host of viral genome replication"/>
    <property type="evidence" value="ECO:0000266"/>
    <property type="project" value="RGD"/>
</dbReference>
<dbReference type="GO" id="GO:0030335">
    <property type="term" value="P:positive regulation of cell migration"/>
    <property type="evidence" value="ECO:0000266"/>
    <property type="project" value="RGD"/>
</dbReference>
<dbReference type="GO" id="GO:0010628">
    <property type="term" value="P:positive regulation of gene expression"/>
    <property type="evidence" value="ECO:0000315"/>
    <property type="project" value="RGD"/>
</dbReference>
<dbReference type="GO" id="GO:0097214">
    <property type="term" value="P:positive regulation of lysosomal membrane permeability"/>
    <property type="evidence" value="ECO:0000315"/>
    <property type="project" value="RGD"/>
</dbReference>
<dbReference type="GO" id="GO:0048026">
    <property type="term" value="P:positive regulation of mRNA splicing, via spliceosome"/>
    <property type="evidence" value="ECO:0000266"/>
    <property type="project" value="RGD"/>
</dbReference>
<dbReference type="GO" id="GO:0050766">
    <property type="term" value="P:positive regulation of phagocytosis"/>
    <property type="evidence" value="ECO:0000315"/>
    <property type="project" value="RGD"/>
</dbReference>
<dbReference type="GO" id="GO:1904592">
    <property type="term" value="P:positive regulation of protein refolding"/>
    <property type="evidence" value="ECO:0000314"/>
    <property type="project" value="RGD"/>
</dbReference>
<dbReference type="GO" id="GO:0045862">
    <property type="term" value="P:positive regulation of proteolysis"/>
    <property type="evidence" value="ECO:0000314"/>
    <property type="project" value="RGD"/>
</dbReference>
<dbReference type="GO" id="GO:0001916">
    <property type="term" value="P:positive regulation of T cell mediated cytotoxicity"/>
    <property type="evidence" value="ECO:0000315"/>
    <property type="project" value="RGD"/>
</dbReference>
<dbReference type="GO" id="GO:0006457">
    <property type="term" value="P:protein folding"/>
    <property type="evidence" value="ECO:0000266"/>
    <property type="project" value="RGD"/>
</dbReference>
<dbReference type="GO" id="GO:0006606">
    <property type="term" value="P:protein import into nucleus"/>
    <property type="evidence" value="ECO:0000315"/>
    <property type="project" value="RGD"/>
</dbReference>
<dbReference type="GO" id="GO:0042026">
    <property type="term" value="P:protein refolding"/>
    <property type="evidence" value="ECO:0000250"/>
    <property type="project" value="ParkinsonsUK-UCL"/>
</dbReference>
<dbReference type="GO" id="GO:0061740">
    <property type="term" value="P:protein targeting to lysosome involved in chaperone-mediated autophagy"/>
    <property type="evidence" value="ECO:0000250"/>
    <property type="project" value="UniProtKB"/>
</dbReference>
<dbReference type="GO" id="GO:0044743">
    <property type="term" value="P:protein transmembrane import into intracellular organelle"/>
    <property type="evidence" value="ECO:0000270"/>
    <property type="project" value="RGD"/>
</dbReference>
<dbReference type="GO" id="GO:0032984">
    <property type="term" value="P:protein-containing complex disassembly"/>
    <property type="evidence" value="ECO:0000315"/>
    <property type="project" value="MGI"/>
</dbReference>
<dbReference type="GO" id="GO:0051726">
    <property type="term" value="P:regulation of cell cycle"/>
    <property type="evidence" value="ECO:0000266"/>
    <property type="project" value="RGD"/>
</dbReference>
<dbReference type="GO" id="GO:0099175">
    <property type="term" value="P:regulation of postsynapse organization"/>
    <property type="evidence" value="ECO:0000266"/>
    <property type="project" value="RGD"/>
</dbReference>
<dbReference type="GO" id="GO:0061635">
    <property type="term" value="P:regulation of protein complex stability"/>
    <property type="evidence" value="ECO:0000314"/>
    <property type="project" value="ParkinsonsUK-UCL"/>
</dbReference>
<dbReference type="GO" id="GO:0031647">
    <property type="term" value="P:regulation of protein stability"/>
    <property type="evidence" value="ECO:0000266"/>
    <property type="project" value="RGD"/>
</dbReference>
<dbReference type="GO" id="GO:0014823">
    <property type="term" value="P:response to activity"/>
    <property type="evidence" value="ECO:0000270"/>
    <property type="project" value="RGD"/>
</dbReference>
<dbReference type="GO" id="GO:0032355">
    <property type="term" value="P:response to estradiol"/>
    <property type="evidence" value="ECO:0000270"/>
    <property type="project" value="RGD"/>
</dbReference>
<dbReference type="GO" id="GO:0045471">
    <property type="term" value="P:response to ethanol"/>
    <property type="evidence" value="ECO:0000270"/>
    <property type="project" value="RGD"/>
</dbReference>
<dbReference type="GO" id="GO:0010045">
    <property type="term" value="P:response to nickel cation"/>
    <property type="evidence" value="ECO:0000270"/>
    <property type="project" value="RGD"/>
</dbReference>
<dbReference type="GO" id="GO:1990834">
    <property type="term" value="P:response to odorant"/>
    <property type="evidence" value="ECO:0000270"/>
    <property type="project" value="RGD"/>
</dbReference>
<dbReference type="GO" id="GO:0032570">
    <property type="term" value="P:response to progesterone"/>
    <property type="evidence" value="ECO:0000270"/>
    <property type="project" value="RGD"/>
</dbReference>
<dbReference type="GO" id="GO:0042594">
    <property type="term" value="P:response to starvation"/>
    <property type="evidence" value="ECO:0000270"/>
    <property type="project" value="RGD"/>
</dbReference>
<dbReference type="GO" id="GO:0009410">
    <property type="term" value="P:response to xenobiotic stimulus"/>
    <property type="evidence" value="ECO:0000270"/>
    <property type="project" value="RGD"/>
</dbReference>
<dbReference type="GO" id="GO:0008380">
    <property type="term" value="P:RNA splicing"/>
    <property type="evidence" value="ECO:0007669"/>
    <property type="project" value="UniProtKB-KW"/>
</dbReference>
<dbReference type="GO" id="GO:0007519">
    <property type="term" value="P:skeletal muscle tissue development"/>
    <property type="evidence" value="ECO:0000270"/>
    <property type="project" value="RGD"/>
</dbReference>
<dbReference type="GO" id="GO:1990832">
    <property type="term" value="P:slow axonal transport"/>
    <property type="evidence" value="ECO:0000270"/>
    <property type="project" value="RGD"/>
</dbReference>
<dbReference type="CDD" id="cd10233">
    <property type="entry name" value="ASKHA_NBD_HSP70_HSPA1"/>
    <property type="match status" value="1"/>
</dbReference>
<dbReference type="DisProt" id="DP02986"/>
<dbReference type="FunFam" id="2.60.34.10:FF:000002">
    <property type="entry name" value="Heat shock 70 kDa"/>
    <property type="match status" value="1"/>
</dbReference>
<dbReference type="FunFam" id="3.30.420.40:FF:000172">
    <property type="entry name" value="Heat shock 70 kDa protein"/>
    <property type="match status" value="1"/>
</dbReference>
<dbReference type="FunFam" id="3.30.420.40:FF:000028">
    <property type="entry name" value="heat shock 70 kDa protein-like"/>
    <property type="match status" value="1"/>
</dbReference>
<dbReference type="FunFam" id="3.30.420.40:FF:000135">
    <property type="entry name" value="Heat shock cognate 71 kDa protein"/>
    <property type="match status" value="1"/>
</dbReference>
<dbReference type="FunFam" id="3.90.640.10:FF:000134">
    <property type="entry name" value="Heat shock cognate 71 kDa protein"/>
    <property type="match status" value="1"/>
</dbReference>
<dbReference type="FunFam" id="1.20.1270.10:FF:000003">
    <property type="entry name" value="heat shock cognate 71 kDa protein-like"/>
    <property type="match status" value="1"/>
</dbReference>
<dbReference type="FunFam" id="3.30.420.40:FF:000026">
    <property type="entry name" value="Heat shock protein 70"/>
    <property type="match status" value="1"/>
</dbReference>
<dbReference type="FunFam" id="3.30.30.30:FF:000025">
    <property type="entry name" value="Uncharacterized protein"/>
    <property type="match status" value="1"/>
</dbReference>
<dbReference type="Gene3D" id="1.20.1270.10">
    <property type="match status" value="1"/>
</dbReference>
<dbReference type="Gene3D" id="3.30.30.30">
    <property type="match status" value="1"/>
</dbReference>
<dbReference type="Gene3D" id="3.30.420.40">
    <property type="match status" value="2"/>
</dbReference>
<dbReference type="Gene3D" id="3.90.640.10">
    <property type="entry name" value="Actin, Chain A, domain 4"/>
    <property type="match status" value="1"/>
</dbReference>
<dbReference type="Gene3D" id="2.60.34.10">
    <property type="entry name" value="Substrate Binding Domain Of DNAk, Chain A, domain 1"/>
    <property type="match status" value="1"/>
</dbReference>
<dbReference type="IDEAL" id="IID50176"/>
<dbReference type="InterPro" id="IPR043129">
    <property type="entry name" value="ATPase_NBD"/>
</dbReference>
<dbReference type="InterPro" id="IPR018181">
    <property type="entry name" value="Heat_shock_70_CS"/>
</dbReference>
<dbReference type="InterPro" id="IPR029048">
    <property type="entry name" value="HSP70_C_sf"/>
</dbReference>
<dbReference type="InterPro" id="IPR029047">
    <property type="entry name" value="HSP70_peptide-bd_sf"/>
</dbReference>
<dbReference type="InterPro" id="IPR013126">
    <property type="entry name" value="Hsp_70_fam"/>
</dbReference>
<dbReference type="NCBIfam" id="NF001413">
    <property type="entry name" value="PRK00290.1"/>
    <property type="match status" value="1"/>
</dbReference>
<dbReference type="PANTHER" id="PTHR19375">
    <property type="entry name" value="HEAT SHOCK PROTEIN 70KDA"/>
    <property type="match status" value="1"/>
</dbReference>
<dbReference type="Pfam" id="PF00012">
    <property type="entry name" value="HSP70"/>
    <property type="match status" value="1"/>
</dbReference>
<dbReference type="PRINTS" id="PR00301">
    <property type="entry name" value="HEATSHOCK70"/>
</dbReference>
<dbReference type="SUPFAM" id="SSF53067">
    <property type="entry name" value="Actin-like ATPase domain"/>
    <property type="match status" value="2"/>
</dbReference>
<dbReference type="SUPFAM" id="SSF100934">
    <property type="entry name" value="Heat shock protein 70kD (HSP70), C-terminal subdomain"/>
    <property type="match status" value="1"/>
</dbReference>
<dbReference type="SUPFAM" id="SSF100920">
    <property type="entry name" value="Heat shock protein 70kD (HSP70), peptide-binding domain"/>
    <property type="match status" value="1"/>
</dbReference>
<dbReference type="PROSITE" id="PS00297">
    <property type="entry name" value="HSP70_1"/>
    <property type="match status" value="1"/>
</dbReference>
<dbReference type="PROSITE" id="PS00329">
    <property type="entry name" value="HSP70_2"/>
    <property type="match status" value="1"/>
</dbReference>
<dbReference type="PROSITE" id="PS01036">
    <property type="entry name" value="HSP70_3"/>
    <property type="match status" value="1"/>
</dbReference>
<organism>
    <name type="scientific">Rattus norvegicus</name>
    <name type="common">Rat</name>
    <dbReference type="NCBI Taxonomy" id="10116"/>
    <lineage>
        <taxon>Eukaryota</taxon>
        <taxon>Metazoa</taxon>
        <taxon>Chordata</taxon>
        <taxon>Craniata</taxon>
        <taxon>Vertebrata</taxon>
        <taxon>Euteleostomi</taxon>
        <taxon>Mammalia</taxon>
        <taxon>Eutheria</taxon>
        <taxon>Euarchontoglires</taxon>
        <taxon>Glires</taxon>
        <taxon>Rodentia</taxon>
        <taxon>Myomorpha</taxon>
        <taxon>Muroidea</taxon>
        <taxon>Muridae</taxon>
        <taxon>Murinae</taxon>
        <taxon>Rattus</taxon>
    </lineage>
</organism>
<gene>
    <name evidence="11" type="primary">Hspa8</name>
    <name evidence="8" type="synonym">Hsc70</name>
    <name evidence="9" type="synonym">Hsc73</name>
</gene>
<feature type="initiator methionine" description="Removed" evidence="2">
    <location>
        <position position="1"/>
    </location>
</feature>
<feature type="chain" id="PRO_0000078273" description="Heat shock cognate 71 kDa protein">
    <location>
        <begin position="2"/>
        <end position="646"/>
    </location>
</feature>
<feature type="region of interest" description="Nucleotide-binding domain (NBD)" evidence="2">
    <location>
        <begin position="2"/>
        <end position="386"/>
    </location>
</feature>
<feature type="region of interest" description="Interaction with BAG1" evidence="1">
    <location>
        <begin position="186"/>
        <end position="377"/>
    </location>
</feature>
<feature type="region of interest" description="Substrate-binding domain (SBD)" evidence="2">
    <location>
        <begin position="394"/>
        <end position="509"/>
    </location>
</feature>
<feature type="region of interest" description="Disordered" evidence="5">
    <location>
        <begin position="614"/>
        <end position="646"/>
    </location>
</feature>
<feature type="compositionally biased region" description="Gly residues" evidence="5">
    <location>
        <begin position="616"/>
        <end position="632"/>
    </location>
</feature>
<feature type="binding site" evidence="1">
    <location>
        <begin position="12"/>
        <end position="15"/>
    </location>
    <ligand>
        <name>ATP</name>
        <dbReference type="ChEBI" id="CHEBI:30616"/>
    </ligand>
</feature>
<feature type="binding site" evidence="3">
    <location>
        <position position="14"/>
    </location>
    <ligand>
        <name>ADP</name>
        <dbReference type="ChEBI" id="CHEBI:456216"/>
    </ligand>
</feature>
<feature type="binding site" evidence="3">
    <location>
        <position position="15"/>
    </location>
    <ligand>
        <name>ADP</name>
        <dbReference type="ChEBI" id="CHEBI:456216"/>
    </ligand>
</feature>
<feature type="binding site" evidence="1">
    <location>
        <position position="71"/>
    </location>
    <ligand>
        <name>ATP</name>
        <dbReference type="ChEBI" id="CHEBI:30616"/>
    </ligand>
</feature>
<feature type="binding site" evidence="1">
    <location>
        <begin position="202"/>
        <end position="204"/>
    </location>
    <ligand>
        <name>ATP</name>
        <dbReference type="ChEBI" id="CHEBI:30616"/>
    </ligand>
</feature>
<feature type="binding site" evidence="3">
    <location>
        <position position="202"/>
    </location>
    <ligand>
        <name>ADP</name>
        <dbReference type="ChEBI" id="CHEBI:456216"/>
    </ligand>
</feature>
<feature type="binding site" evidence="1">
    <location>
        <begin position="268"/>
        <end position="275"/>
    </location>
    <ligand>
        <name>ATP</name>
        <dbReference type="ChEBI" id="CHEBI:30616"/>
    </ligand>
</feature>
<feature type="binding site" evidence="3">
    <location>
        <position position="268"/>
    </location>
    <ligand>
        <name>ADP</name>
        <dbReference type="ChEBI" id="CHEBI:456216"/>
    </ligand>
</feature>
<feature type="binding site" evidence="3">
    <location>
        <position position="271"/>
    </location>
    <ligand>
        <name>ADP</name>
        <dbReference type="ChEBI" id="CHEBI:456216"/>
    </ligand>
</feature>
<feature type="binding site" evidence="3">
    <location>
        <position position="275"/>
    </location>
    <ligand>
        <name>ADP</name>
        <dbReference type="ChEBI" id="CHEBI:456216"/>
    </ligand>
</feature>
<feature type="binding site" evidence="1">
    <location>
        <begin position="339"/>
        <end position="342"/>
    </location>
    <ligand>
        <name>ATP</name>
        <dbReference type="ChEBI" id="CHEBI:30616"/>
    </ligand>
</feature>
<feature type="binding site" evidence="3">
    <location>
        <position position="339"/>
    </location>
    <ligand>
        <name>ADP</name>
        <dbReference type="ChEBI" id="CHEBI:456216"/>
    </ligand>
</feature>
<feature type="modified residue" description="N-acetylserine" evidence="2">
    <location>
        <position position="2"/>
    </location>
</feature>
<feature type="modified residue" description="N6-acetyllysine" evidence="4">
    <location>
        <position position="108"/>
    </location>
</feature>
<feature type="modified residue" description="Phosphoserine" evidence="2">
    <location>
        <position position="153"/>
    </location>
</feature>
<feature type="modified residue" description="N6-acetyllysine" evidence="2">
    <location>
        <position position="246"/>
    </location>
</feature>
<feature type="modified residue" description="N6-acetyllysine; alternate" evidence="2">
    <location>
        <position position="319"/>
    </location>
</feature>
<feature type="modified residue" description="N6-succinyllysine; alternate" evidence="4">
    <location>
        <position position="319"/>
    </location>
</feature>
<feature type="modified residue" description="N6-acetyllysine" evidence="4">
    <location>
        <position position="328"/>
    </location>
</feature>
<feature type="modified residue" description="Phosphoserine" evidence="2">
    <location>
        <position position="329"/>
    </location>
</feature>
<feature type="modified residue" description="Phosphoserine" evidence="2">
    <location>
        <position position="362"/>
    </location>
</feature>
<feature type="modified residue" description="Omega-N-methylarginine" evidence="2">
    <location>
        <position position="469"/>
    </location>
</feature>
<feature type="modified residue" description="N6-acetyllysine; alternate" evidence="4">
    <location>
        <position position="512"/>
    </location>
</feature>
<feature type="modified residue" description="N6-succinyllysine; alternate" evidence="4">
    <location>
        <position position="512"/>
    </location>
</feature>
<feature type="modified residue" description="N6-acetyllysine" evidence="4">
    <location>
        <position position="524"/>
    </location>
</feature>
<feature type="modified residue" description="Phosphoserine" evidence="2">
    <location>
        <position position="541"/>
    </location>
</feature>
<feature type="modified residue" description="N6,N6,N6-trimethyllysine; by METTL21A; alternate" evidence="2">
    <location>
        <position position="561"/>
    </location>
</feature>
<feature type="modified residue" description="N6,N6-dimethyllysine; alternate" evidence="2">
    <location>
        <position position="561"/>
    </location>
</feature>
<feature type="modified residue" description="N6-acetyllysine" evidence="2">
    <location>
        <position position="589"/>
    </location>
</feature>
<feature type="modified residue" description="N6-acetyllysine" evidence="2">
    <location>
        <position position="597"/>
    </location>
</feature>
<feature type="modified residue" description="N6-acetyllysine" evidence="2">
    <location>
        <position position="601"/>
    </location>
</feature>
<feature type="cross-link" description="Glycyl lysine isopeptide (Lys-Gly) (interchain with G-Cter in SUMO1); alternate" evidence="2">
    <location>
        <position position="512"/>
    </location>
</feature>
<feature type="cross-link" description="Glycyl lysine isopeptide (Lys-Gly) (interchain with G-Cter in SUMO2); alternate" evidence="2">
    <location>
        <position position="512"/>
    </location>
</feature>
<feature type="strand" evidence="14">
    <location>
        <begin position="6"/>
        <end position="10"/>
    </location>
</feature>
<feature type="strand" evidence="14">
    <location>
        <begin position="13"/>
        <end position="22"/>
    </location>
</feature>
<feature type="strand" evidence="14">
    <location>
        <begin position="25"/>
        <end position="28"/>
    </location>
</feature>
<feature type="strand" evidence="14">
    <location>
        <begin position="32"/>
        <end position="34"/>
    </location>
</feature>
<feature type="strand" evidence="14">
    <location>
        <begin position="41"/>
        <end position="44"/>
    </location>
</feature>
<feature type="strand" evidence="14">
    <location>
        <begin position="49"/>
        <end position="52"/>
    </location>
</feature>
<feature type="helix" evidence="14">
    <location>
        <begin position="53"/>
        <end position="58"/>
    </location>
</feature>
<feature type="turn" evidence="14">
    <location>
        <begin position="59"/>
        <end position="61"/>
    </location>
</feature>
<feature type="strand" evidence="14">
    <location>
        <begin position="66"/>
        <end position="68"/>
    </location>
</feature>
<feature type="turn" evidence="14">
    <location>
        <begin position="71"/>
        <end position="75"/>
    </location>
</feature>
<feature type="helix" evidence="14">
    <location>
        <begin position="81"/>
        <end position="86"/>
    </location>
</feature>
<feature type="strand" evidence="14">
    <location>
        <begin position="91"/>
        <end position="97"/>
    </location>
</feature>
<feature type="strand" evidence="14">
    <location>
        <begin position="100"/>
        <end position="105"/>
    </location>
</feature>
<feature type="strand" evidence="14">
    <location>
        <begin position="112"/>
        <end position="114"/>
    </location>
</feature>
<feature type="helix" evidence="14">
    <location>
        <begin position="116"/>
        <end position="135"/>
    </location>
</feature>
<feature type="strand" evidence="14">
    <location>
        <begin position="141"/>
        <end position="146"/>
    </location>
</feature>
<feature type="helix" evidence="14">
    <location>
        <begin position="152"/>
        <end position="165"/>
    </location>
</feature>
<feature type="strand" evidence="14">
    <location>
        <begin position="168"/>
        <end position="174"/>
    </location>
</feature>
<feature type="helix" evidence="14">
    <location>
        <begin position="175"/>
        <end position="182"/>
    </location>
</feature>
<feature type="turn" evidence="14">
    <location>
        <begin position="183"/>
        <end position="186"/>
    </location>
</feature>
<feature type="strand" evidence="14">
    <location>
        <begin position="193"/>
        <end position="200"/>
    </location>
</feature>
<feature type="strand" evidence="14">
    <location>
        <begin position="205"/>
        <end position="213"/>
    </location>
</feature>
<feature type="strand" evidence="14">
    <location>
        <begin position="216"/>
        <end position="223"/>
    </location>
</feature>
<feature type="helix" evidence="14">
    <location>
        <begin position="230"/>
        <end position="249"/>
    </location>
</feature>
<feature type="helix" evidence="14">
    <location>
        <begin position="257"/>
        <end position="276"/>
    </location>
</feature>
<feature type="strand" evidence="14">
    <location>
        <begin position="278"/>
        <end position="288"/>
    </location>
</feature>
<feature type="strand" evidence="14">
    <location>
        <begin position="291"/>
        <end position="298"/>
    </location>
</feature>
<feature type="helix" evidence="14">
    <location>
        <begin position="299"/>
        <end position="305"/>
    </location>
</feature>
<feature type="helix" evidence="14">
    <location>
        <begin position="307"/>
        <end position="312"/>
    </location>
</feature>
<feature type="helix" evidence="14">
    <location>
        <begin position="314"/>
        <end position="323"/>
    </location>
</feature>
<feature type="helix" evidence="14">
    <location>
        <begin position="328"/>
        <end position="330"/>
    </location>
</feature>
<feature type="strand" evidence="14">
    <location>
        <begin position="332"/>
        <end position="338"/>
    </location>
</feature>
<feature type="helix" evidence="14">
    <location>
        <begin position="339"/>
        <end position="342"/>
    </location>
</feature>
<feature type="helix" evidence="14">
    <location>
        <begin position="344"/>
        <end position="353"/>
    </location>
</feature>
<feature type="turn" evidence="14">
    <location>
        <begin position="354"/>
        <end position="356"/>
    </location>
</feature>
<feature type="turn" evidence="14">
    <location>
        <begin position="365"/>
        <end position="367"/>
    </location>
</feature>
<feature type="helix" evidence="14">
    <location>
        <begin position="368"/>
        <end position="380"/>
    </location>
</feature>
<feature type="strand" evidence="12">
    <location>
        <begin position="388"/>
        <end position="391"/>
    </location>
</feature>
<feature type="strand" evidence="12">
    <location>
        <begin position="396"/>
        <end position="399"/>
    </location>
</feature>
<feature type="strand" evidence="12">
    <location>
        <begin position="401"/>
        <end position="405"/>
    </location>
</feature>
<feature type="turn" evidence="12">
    <location>
        <begin position="406"/>
        <end position="408"/>
    </location>
</feature>
<feature type="strand" evidence="12">
    <location>
        <begin position="409"/>
        <end position="411"/>
    </location>
</feature>
<feature type="strand" evidence="12">
    <location>
        <begin position="418"/>
        <end position="429"/>
    </location>
</feature>
<feature type="strand" evidence="12">
    <location>
        <begin position="431"/>
        <end position="434"/>
    </location>
</feature>
<feature type="strand" evidence="12">
    <location>
        <begin position="438"/>
        <end position="445"/>
    </location>
</feature>
<feature type="strand" evidence="12">
    <location>
        <begin position="447"/>
        <end position="450"/>
    </location>
</feature>
<feature type="strand" evidence="12">
    <location>
        <begin position="452"/>
        <end position="461"/>
    </location>
</feature>
<feature type="strand" evidence="15">
    <location>
        <begin position="468"/>
        <end position="470"/>
    </location>
</feature>
<feature type="strand" evidence="12">
    <location>
        <begin position="472"/>
        <end position="481"/>
    </location>
</feature>
<feature type="turn" evidence="12">
    <location>
        <begin position="482"/>
        <end position="484"/>
    </location>
</feature>
<feature type="strand" evidence="12">
    <location>
        <begin position="485"/>
        <end position="492"/>
    </location>
</feature>
<feature type="turn" evidence="12">
    <location>
        <begin position="493"/>
        <end position="496"/>
    </location>
</feature>
<feature type="strand" evidence="12">
    <location>
        <begin position="497"/>
        <end position="503"/>
    </location>
</feature>
<feature type="helix" evidence="12">
    <location>
        <begin position="511"/>
        <end position="518"/>
    </location>
</feature>
<feature type="turn" evidence="12">
    <location>
        <begin position="519"/>
        <end position="521"/>
    </location>
</feature>
<feature type="helix" evidence="12">
    <location>
        <begin position="522"/>
        <end position="527"/>
    </location>
</feature>
<feature type="turn" evidence="12">
    <location>
        <begin position="532"/>
        <end position="534"/>
    </location>
</feature>
<feature type="strand" evidence="12">
    <location>
        <begin position="537"/>
        <end position="541"/>
    </location>
</feature>
<feature type="helix" evidence="13">
    <location>
        <begin position="542"/>
        <end position="553"/>
    </location>
</feature>
<feature type="helix" evidence="13">
    <location>
        <begin position="556"/>
        <end position="558"/>
    </location>
</feature>
<feature type="turn" evidence="13">
    <location>
        <begin position="559"/>
        <end position="561"/>
    </location>
</feature>
<feature type="helix" evidence="13">
    <location>
        <begin position="564"/>
        <end position="595"/>
    </location>
</feature>
<feature type="helix" evidence="13">
    <location>
        <begin position="597"/>
        <end position="610"/>
    </location>
</feature>
<keyword id="KW-0002">3D-structure</keyword>
<keyword id="KW-0007">Acetylation</keyword>
<keyword id="KW-0067">ATP-binding</keyword>
<keyword id="KW-0072">Autophagy</keyword>
<keyword id="KW-1003">Cell membrane</keyword>
<keyword id="KW-0143">Chaperone</keyword>
<keyword id="KW-0963">Cytoplasm</keyword>
<keyword id="KW-0903">Direct protein sequencing</keyword>
<keyword id="KW-0378">Hydrolase</keyword>
<keyword id="KW-1017">Isopeptide bond</keyword>
<keyword id="KW-0458">Lysosome</keyword>
<keyword id="KW-0472">Membrane</keyword>
<keyword id="KW-0488">Methylation</keyword>
<keyword id="KW-0507">mRNA processing</keyword>
<keyword id="KW-0508">mRNA splicing</keyword>
<keyword id="KW-0547">Nucleotide-binding</keyword>
<keyword id="KW-0539">Nucleus</keyword>
<keyword id="KW-0597">Phosphoprotein</keyword>
<keyword id="KW-1185">Reference proteome</keyword>
<keyword id="KW-0678">Repressor</keyword>
<keyword id="KW-0747">Spliceosome</keyword>
<keyword id="KW-0346">Stress response</keyword>
<keyword id="KW-0804">Transcription</keyword>
<keyword id="KW-0805">Transcription regulation</keyword>
<keyword id="KW-0832">Ubl conjugation</keyword>
<proteinExistence type="evidence at protein level"/>
<reference key="1">
    <citation type="journal article" date="1987" name="EMBO J.">
        <title>Cloning and expression of a gene encoding hsc73, the major hsp70-like protein in unstressed rat cells.</title>
        <authorList>
            <person name="Sorger P.K."/>
            <person name="Pelham H.R.B."/>
        </authorList>
    </citation>
    <scope>NUCLEOTIDE SEQUENCE [GENOMIC DNA]</scope>
</reference>
<reference key="2">
    <citation type="journal article" date="1985" name="Mol. Cell. Biol.">
        <title>Constitutively expressed rat mRNA encoding a 70-kilodalton heat-shock-like protein.</title>
        <authorList>
            <person name="O'Malley K."/>
            <person name="Mauron A."/>
            <person name="Barchas J.D."/>
            <person name="Kedes L."/>
        </authorList>
    </citation>
    <scope>NUCLEOTIDE SEQUENCE [MRNA]</scope>
</reference>
<reference key="3">
    <citation type="journal article" date="2004" name="Genome Res.">
        <title>The status, quality, and expansion of the NIH full-length cDNA project: the Mammalian Gene Collection (MGC).</title>
        <authorList>
            <consortium name="The MGC Project Team"/>
        </authorList>
    </citation>
    <scope>NUCLEOTIDE SEQUENCE [LARGE SCALE MRNA]</scope>
    <source>
        <tissue>Heart</tissue>
        <tissue>Pituitary</tissue>
    </source>
</reference>
<reference key="4">
    <citation type="submission" date="2007-09" db="UniProtKB">
        <authorList>
            <person name="Lubec G."/>
            <person name="Afjehi-Sadat L."/>
            <person name="Chen W.-Q."/>
            <person name="Kang S.U."/>
            <person name="Lubec S."/>
        </authorList>
    </citation>
    <scope>PROTEIN SEQUENCE OF 4-36; 57-71; 77-108; 127-155; 160-171; 237-246; 300-319; 349-357; 424-447; 452-458; 518-526; 540-550; 584-597 AND 602-609</scope>
    <scope>IDENTIFICATION BY MASS SPECTROMETRY</scope>
    <source>
        <strain>Sprague-Dawley</strain>
        <tissue>Brain</tissue>
        <tissue>Hippocampus</tissue>
        <tissue>Spinal cord</tissue>
    </source>
</reference>
<reference key="5">
    <citation type="journal article" date="1999" name="J. Biol. Chem.">
        <title>Specific interaction of the 70-kDa heat shock cognate protein with the tetratricopeptide repeats.</title>
        <authorList>
            <person name="Liu F.H."/>
            <person name="Wu S.J."/>
            <person name="Hu S.M."/>
            <person name="Hsiao C.D."/>
            <person name="Wang C."/>
        </authorList>
    </citation>
    <scope>INTERACTION WITH DNAJC7</scope>
</reference>
<reference key="6">
    <citation type="journal article" date="2005" name="Arch. Biochem. Biophys.">
        <title>Small glutamine-rich tetratricopeptide repeat-containing protein is composed of three structural units with distinct functions.</title>
        <authorList>
            <person name="Liou S.T."/>
            <person name="Wang C."/>
        </authorList>
    </citation>
    <scope>INTERACTION WITH SGTA</scope>
</reference>
<reference key="7">
    <citation type="journal article" date="1999" name="J. Mol. Biol.">
        <title>High-resolution solution structure of the 18 kDa substrate-binding domain of the mammalian chaperone protein Hsc70.</title>
        <authorList>
            <person name="Morshauser R.C."/>
            <person name="Hu W."/>
            <person name="Wang H."/>
            <person name="Pang Y."/>
            <person name="Flynn G.C."/>
            <person name="Zuiderweg E.R.P."/>
        </authorList>
    </citation>
    <scope>STRUCTURE BY NMR OF 385-543</scope>
</reference>
<protein>
    <recommendedName>
        <fullName evidence="10">Heat shock cognate 71 kDa protein</fullName>
        <ecNumber evidence="2">3.6.4.10</ecNumber>
    </recommendedName>
    <alternativeName>
        <fullName>Heat shock 70 kDa protein 8</fullName>
    </alternativeName>
</protein>
<evidence type="ECO:0000250" key="1"/>
<evidence type="ECO:0000250" key="2">
    <source>
        <dbReference type="UniProtKB" id="P11142"/>
    </source>
</evidence>
<evidence type="ECO:0000250" key="3">
    <source>
        <dbReference type="UniProtKB" id="P19120"/>
    </source>
</evidence>
<evidence type="ECO:0000250" key="4">
    <source>
        <dbReference type="UniProtKB" id="P63017"/>
    </source>
</evidence>
<evidence type="ECO:0000256" key="5">
    <source>
        <dbReference type="SAM" id="MobiDB-lite"/>
    </source>
</evidence>
<evidence type="ECO:0000269" key="6">
    <source>
    </source>
</evidence>
<evidence type="ECO:0000269" key="7">
    <source>
    </source>
</evidence>
<evidence type="ECO:0000303" key="8">
    <source>
    </source>
</evidence>
<evidence type="ECO:0000303" key="9">
    <source>
    </source>
</evidence>
<evidence type="ECO:0000305" key="10"/>
<evidence type="ECO:0000312" key="11">
    <source>
        <dbReference type="RGD" id="621725"/>
    </source>
</evidence>
<evidence type="ECO:0007829" key="12">
    <source>
        <dbReference type="PDB" id="1CKR"/>
    </source>
</evidence>
<evidence type="ECO:0007829" key="13">
    <source>
        <dbReference type="PDB" id="1UD0"/>
    </source>
</evidence>
<evidence type="ECO:0007829" key="14">
    <source>
        <dbReference type="PDB" id="2V7Z"/>
    </source>
</evidence>
<evidence type="ECO:0007829" key="15">
    <source>
        <dbReference type="PDB" id="7HSC"/>
    </source>
</evidence>
<accession>P63018</accession>
<accession>P08109</accession>
<accession>P12225</accession>
<accession>Q4FZY7</accession>
<accession>Q62373</accession>
<accession>Q62374</accession>
<accession>Q62375</accession>
<name>HSP7C_RAT</name>
<sequence>MSKGPAVGIDLGTTYSCVGVFQHGKVEIIANDQGNRTTPSYVAFTDTERLIGDAAKNQVAMNPTNTVFDAKRLIGRRFDDAVVQSDMKHWPFMVVNDAGRPKVQVEYKGETKSFYPEEVSSMVLTKMKEIAEAYLGKTVTNAVVTVPAYFNDSQRQATKDAGTIAGLNVLRIINEPTAAAIAYGLDKKVGAERNVLIFDLGGGTFDVSILTIEDGIFEVKSTAGDTHLGGEDFDNRMVNHFIAEFKRKHKKDISENKRAVRRLRTACERAKRTLSSSTQASIEIDSLYEGIDFYTSITRARFEELNADLFRGTLDPVEKALRDAKLDKSQIHDIVLVGGSTRIPKIQKLLQDFFNGKELNKSINPDEAVAYGAAVQAAILSGDKSENVQDLLLLDVTPLSLGIETAGGVMTVLIKRNTTIPTKQTQTFTTYSDNQPGVLIQVYEGERAMTKDNNLLGKFELTGIPPAPRGVPQIEVTFDIDANGILNVSAVDKSTGKENKITITNDKGRLSKEDIERMVQEAEKYKAEDEKQRDKVSSKNSLESYAFNMKATVEDEKLQGKINDEDKQKILDKCNEIISWLDKNQTAEKEEFEHQQKELEKVCNPIITKLYQSAGGMPGGMPGGFPGGGAPPSGGASSGPTIEEVD</sequence>
<comment type="function">
    <text evidence="2 3">Molecular chaperone implicated in a wide variety of cellular processes, including protection of the proteome from stress, folding and transport of newly synthesized polypeptides, chaperone-mediated autophagy, activation of proteolysis of misfolded proteins, formation and dissociation of protein complexes, and antigen presentation. Plays a pivotal role in the protein quality control system, ensuring the correct folding of proteins, the re-folding of misfolded proteins and controlling the targeting of proteins for subsequent degradation. This is achieved through cycles of ATP binding, ATP hydrolysis and ADP release, mediated by co-chaperones. The co-chaperones have been shown to not only regulate different steps of the ATPase cycle of HSP70, but they also have an individual specificity such that one co-chaperone may promote folding of a substrate while another may promote degradation. The affinity of HSP70 for polypeptides is regulated by its nucleotide bound state. In the ATP-bound form, it has a low affinity for substrate proteins. However, upon hydrolysis of the ATP to ADP, it undergoes a conformational change that increases its affinity for substrate proteins. HSP70 goes through repeated cycles of ATP hydrolysis and nucleotide exchange, which permits cycles of substrate binding and release. The HSP70-associated co-chaperones are of three types: J-domain co-chaperones HSP40s (stimulate ATPase hydrolysis by HSP70), the nucleotide exchange factors (NEF) such as BAG1/2/3 (facilitate conversion of HSP70 from the ADP-bound to the ATP-bound state thereby promoting substrate release), and the TPR domain chaperones such as HOPX and STUB1. Plays a critical role in mitochondrial import, delivers preproteins to the mitochondrial import receptor TOMM70. Acts as a repressor of transcriptional activation. Inhibits the transcriptional coactivator activity of CITED1 on Smad-mediated transcription. Component of the PRP19-CDC5L complex that forms an integral part of the spliceosome and is required for activating pre-mRNA splicing. May have a scaffolding role in the spliceosome assembly as it contacts all other components of the core complex. Binds bacterial lipopolysaccharide (LPS) and mediates LPS-induced inflammatory response, including TNF secretion by monocytes. Substrate recognition component in chaperone-mediated autophagy (CMA), a selective protein degradation process that mediates degradation of proteins with a -KFERQ motif: HSPA8/HSC70 specifically recognizes and binds cytosolic proteins bearing a -KFERQ motif and promotes their recruitment to the surface of the lysosome where they bind to lysosomal protein LAMP2. KFERQ motif-containing proteins are eventually transported into the lysosomal lumen where they are degraded. In conjunction with LAMP2, facilitates MHC class II presentation of cytoplasmic antigens by guiding antigens to the lysosomal membrane for interaction with LAMP2 which then elicits MHC class II presentation of peptides to the cell membrane. Participates in the ER-associated degradation (ERAD) quality control pathway in conjunction with J domain-containing co-chaperones and the E3 ligase STUB1. It is recruited to clathrin-coated vesicles through its interaction with DNAJC6 leading to activation of HSPA8/HSC70 ATPase activity and therefore uncoating of clathrin-coated vesicles (By similarity).</text>
</comment>
<comment type="catalytic activity">
    <reaction evidence="2">
        <text>ATP + H2O = ADP + phosphate + H(+)</text>
        <dbReference type="Rhea" id="RHEA:13065"/>
        <dbReference type="ChEBI" id="CHEBI:15377"/>
        <dbReference type="ChEBI" id="CHEBI:15378"/>
        <dbReference type="ChEBI" id="CHEBI:30616"/>
        <dbReference type="ChEBI" id="CHEBI:43474"/>
        <dbReference type="ChEBI" id="CHEBI:456216"/>
        <dbReference type="EC" id="3.6.4.10"/>
    </reaction>
</comment>
<comment type="subunit">
    <text evidence="2 3 4 6 7">Component of the chaperone-assisted selective autophagy (CASA) complex consisting of BAG3, HSPA8/HSC70, HSPB8 and STUB1/CHIP (By similarity). Identified in a IGF2BP1-dependent mRNP granule complex containing untranslated mRNAs (By similarity). Interacts with PACRG (By similarity). Interacts with HSPH1/HSP105 (By similarity). Interacts with IRAK1BP1 and BAG1 (By similarity). Interacts with DNAJC7 (PubMed:10567422). Interacts with DNAJB12 (via J domain) (By similarity). Interacts with DNAJB14 (via J domain) (By similarity). Interacts (via C-terminus) with the E3 ligase STUB1 forming a 210 kDa complex of one STUB1 and two HSPA8 molecules (By similarity). Interacts with CITED1 (via N-terminus); the interaction suppresses the association of CITED1 to p300/CBP and Smad-mediated transcription transactivation (By similarity). Component of the PRP19-CDC5L splicing complex composed of a core complex comprising a homotetramer of PRPF19, CDC5L, PLRG1 and BCAS2, and at least three less stably associated proteins CTNNBL1, CWC15 and HSPA8 (By similarity). Interacts with TRIM5 (By similarity). Part of a complex composed at least of ASH2L, EMSY, HCFC1, HSPA8, CCAR2, MATR3, MKI67, RBBP5, TUBB2A, WDR5 and ZNF335; this complex may have a histone H3-specific methyltransferase activity (By similarity). Interacts with METTL21A (By similarity). Following LPS binding, may form a complex with CXCR4, GDF5 and HSP90AA1 (By similarity). Interacts with PRKN (By similarity). Interacts with FOXP3 (By similarity). Interacts with DNAJC9 (via J domain) (By similarity). Interacts with MLLT11 (By similarity). Interacts with RNF207 (By similarity). Interacts with DNAJC21 (By similarity). Interacts with DNAJB2 (By similarity). Interacts with TTC1 (via TPR repeats) (By similarity). Interacts with SGTA (via TPR repeats) (PubMed:15708368). Interacts with HSF1 (via transactivation domain) (By similarity). Interacts with HOPX, STUB1, HSP40, HSP90, BAG2 and BAG3 (By similarity). Interacts with DNAJC12 (By similarity). Interacts with HSPC138 (By similarity). Interacts with ZMYND10 (By similarity). Interacts with VGF-derived peptide TLQP-21 (By similarity). Interacts with BCL2L1, GIMAP5 and MCL1; the interaction with BCL2L1 or MCL1 is impaired in the absence of GIMAP5 (By similarity). Interacts with NLPR12 (By similarity). Interacts with TTC4 (By similarity). Interacts with TOMM70; the interaction is required for preprotein mitochondrial import (By similarity). May interact with DNJC9; the interaction seems to be histone-dependent (By similarity). Interacts with BAG5 and JPH2; the interaction with JPH2 is increased in the presence of BAG5 (By similarity). Interacts with DNAJC6 (via J domain) in an ATP-dependent manner; this interaction stimulates the HSPA8's ATPase activity. Forms a complex composed of HSPA8, CLTC and DNAJC6 (By similarity). Interacts with HSPA8; this interaction modulates migratory and antigen-presenting capacities of dendritic cells (By similarity).</text>
</comment>
<comment type="subcellular location">
    <subcellularLocation>
        <location evidence="2">Cytoplasm</location>
    </subcellularLocation>
    <subcellularLocation>
        <location evidence="2">Melanosome</location>
    </subcellularLocation>
    <subcellularLocation>
        <location evidence="2">Nucleus</location>
        <location evidence="2">Nucleolus</location>
    </subcellularLocation>
    <subcellularLocation>
        <location evidence="2">Cell membrane</location>
    </subcellularLocation>
    <subcellularLocation>
        <location evidence="2">Lysosome membrane</location>
        <topology evidence="2">Peripheral membrane protein</topology>
        <orientation evidence="2">Cytoplasmic side</orientation>
    </subcellularLocation>
    <text evidence="2">Localized in cytoplasmic mRNP granules containing untranslated mRNAs. Translocates rapidly from the cytoplasm to the nuclei, and especially to the nucleoli, upon heat shock.</text>
</comment>
<comment type="induction">
    <text>Constitutively synthesized.</text>
</comment>
<comment type="domain">
    <text evidence="2">The N-terminal nucleotide binding domain (NBD) (also known as the ATPase domain) is responsible for binding and hydrolyzing ATP. The C-terminal substrate-binding domain (SBD) (also known as peptide-binding domain) binds to the client/substrate proteins. The two domains are allosterically coupled so that, when ATP is bound to the NBD, the SBD binds relatively weakly to clients. When ADP is bound in the NBD, a conformational change enhances the affinity of the SBD for client proteins.</text>
</comment>
<comment type="PTM">
    <text evidence="2">Acetylated.</text>
</comment>
<comment type="PTM">
    <text evidence="2">ISGylated.</text>
</comment>
<comment type="PTM">
    <text evidence="2">Trimethylation at Lys-561 reduces fibrillar SNCA binding.</text>
</comment>
<comment type="similarity">
    <text evidence="10">Belongs to the heat shock protein 70 family.</text>
</comment>